<sequence length="397" mass="42288">MAKGSAGDAPNTRDTSFKRPKIRESCTHCSSQKIRCTKERPACARCVNKGLLCQYNISRRTGTRRHSVRATPEPETTISNAPTSSVAPDSVKIDGKRSPAMSDFALLDGLETFDNSLWHQPITTDIQDIDMQYFDFFDPGGYQAEPEPINSFDIDSTLLCGTSTAGYLPELDAEASTRPSSSSSPPSQRSDGGRATTHGGGGCISTALQIFSELHVSSSACPIAAGAPSHNIREFDHVLDSNRAALEKLSSILDCPPCCHDQEVLTALFLAVQKALSWYSAALDVAGDGEPTSPSSRVKSPPAFLGSYALGAQAQTLARAYVVMAQLQQHFQPLLAKLQRISSLSALGARSSSTTSLSSVSSLQSSTSGSAVIECQKRALQEALEDVVAKIEGIKRG</sequence>
<dbReference type="EMBL" id="LKMD01000100">
    <property type="protein sequence ID" value="PIB02401.1"/>
    <property type="molecule type" value="Genomic_DNA"/>
</dbReference>
<dbReference type="RefSeq" id="XP_023460061.1">
    <property type="nucleotide sequence ID" value="XM_023593479.1"/>
</dbReference>
<dbReference type="SMR" id="A0A2G5ICB4"/>
<dbReference type="GeneID" id="35424649"/>
<dbReference type="OrthoDB" id="2328572at2759"/>
<dbReference type="Proteomes" id="UP000230605">
    <property type="component" value="Chromosome 1"/>
</dbReference>
<dbReference type="GO" id="GO:0005634">
    <property type="term" value="C:nucleus"/>
    <property type="evidence" value="ECO:0007669"/>
    <property type="project" value="UniProtKB-SubCell"/>
</dbReference>
<dbReference type="GO" id="GO:0003677">
    <property type="term" value="F:DNA binding"/>
    <property type="evidence" value="ECO:0007669"/>
    <property type="project" value="UniProtKB-KW"/>
</dbReference>
<dbReference type="GO" id="GO:0000981">
    <property type="term" value="F:DNA-binding transcription factor activity, RNA polymerase II-specific"/>
    <property type="evidence" value="ECO:0007669"/>
    <property type="project" value="InterPro"/>
</dbReference>
<dbReference type="GO" id="GO:0008270">
    <property type="term" value="F:zinc ion binding"/>
    <property type="evidence" value="ECO:0007669"/>
    <property type="project" value="InterPro"/>
</dbReference>
<dbReference type="GO" id="GO:0045122">
    <property type="term" value="P:aflatoxin biosynthetic process"/>
    <property type="evidence" value="ECO:0007669"/>
    <property type="project" value="InterPro"/>
</dbReference>
<dbReference type="CDD" id="cd00067">
    <property type="entry name" value="GAL4"/>
    <property type="match status" value="1"/>
</dbReference>
<dbReference type="Gene3D" id="4.10.240.10">
    <property type="entry name" value="Zn(2)-C6 fungal-type DNA-binding domain"/>
    <property type="match status" value="1"/>
</dbReference>
<dbReference type="InterPro" id="IPR013700">
    <property type="entry name" value="AflR"/>
</dbReference>
<dbReference type="InterPro" id="IPR050675">
    <property type="entry name" value="OAF3"/>
</dbReference>
<dbReference type="InterPro" id="IPR036864">
    <property type="entry name" value="Zn2-C6_fun-type_DNA-bd_sf"/>
</dbReference>
<dbReference type="InterPro" id="IPR001138">
    <property type="entry name" value="Zn2Cys6_DnaBD"/>
</dbReference>
<dbReference type="PANTHER" id="PTHR31069:SF31">
    <property type="entry name" value="MONODICTYPHENONE CLUSTER TRANSCRIPTION FACTOR-RELATED"/>
    <property type="match status" value="1"/>
</dbReference>
<dbReference type="PANTHER" id="PTHR31069">
    <property type="entry name" value="OLEATE-ACTIVATED TRANSCRIPTION FACTOR 1-RELATED"/>
    <property type="match status" value="1"/>
</dbReference>
<dbReference type="Pfam" id="PF08493">
    <property type="entry name" value="AflR"/>
    <property type="match status" value="1"/>
</dbReference>
<dbReference type="Pfam" id="PF00172">
    <property type="entry name" value="Zn_clus"/>
    <property type="match status" value="1"/>
</dbReference>
<dbReference type="PRINTS" id="PR00755">
    <property type="entry name" value="AFLATOXINBRP"/>
</dbReference>
<dbReference type="SMART" id="SM00066">
    <property type="entry name" value="GAL4"/>
    <property type="match status" value="1"/>
</dbReference>
<dbReference type="SUPFAM" id="SSF57701">
    <property type="entry name" value="Zn2/Cys6 DNA-binding domain"/>
    <property type="match status" value="1"/>
</dbReference>
<dbReference type="PROSITE" id="PS00463">
    <property type="entry name" value="ZN2_CY6_FUNGAL_1"/>
    <property type="match status" value="1"/>
</dbReference>
<dbReference type="PROSITE" id="PS50048">
    <property type="entry name" value="ZN2_CY6_FUNGAL_2"/>
    <property type="match status" value="1"/>
</dbReference>
<name>CTB8_CERBT</name>
<organism>
    <name type="scientific">Cercospora beticola</name>
    <name type="common">Sugarbeet leaf spot fungus</name>
    <dbReference type="NCBI Taxonomy" id="122368"/>
    <lineage>
        <taxon>Eukaryota</taxon>
        <taxon>Fungi</taxon>
        <taxon>Dikarya</taxon>
        <taxon>Ascomycota</taxon>
        <taxon>Pezizomycotina</taxon>
        <taxon>Dothideomycetes</taxon>
        <taxon>Dothideomycetidae</taxon>
        <taxon>Mycosphaerellales</taxon>
        <taxon>Mycosphaerellaceae</taxon>
        <taxon>Cercospora</taxon>
    </lineage>
</organism>
<gene>
    <name evidence="5" type="primary">CTB8</name>
    <name type="ORF">CB0940_00837</name>
</gene>
<feature type="chain" id="PRO_0000449872" description="Cercosporin biosynthesis regulatory protein CTB8">
    <location>
        <begin position="1"/>
        <end position="397"/>
    </location>
</feature>
<feature type="DNA-binding region" description="Zn(2)-C6 fungal-type" evidence="2">
    <location>
        <begin position="26"/>
        <end position="53"/>
    </location>
</feature>
<feature type="region of interest" description="Disordered" evidence="3">
    <location>
        <begin position="63"/>
        <end position="90"/>
    </location>
</feature>
<feature type="region of interest" description="Disordered" evidence="3">
    <location>
        <begin position="173"/>
        <end position="198"/>
    </location>
</feature>
<feature type="compositionally biased region" description="Polar residues" evidence="3">
    <location>
        <begin position="74"/>
        <end position="87"/>
    </location>
</feature>
<feature type="compositionally biased region" description="Low complexity" evidence="3">
    <location>
        <begin position="179"/>
        <end position="197"/>
    </location>
</feature>
<proteinExistence type="inferred from homology"/>
<comment type="function">
    <text evidence="1 4">Transcription regulator of the gene cluster that mediates the biosynthesis of cercosporin, a light-activated, non-host-selective toxin (By similarity). The perylenequinone chromophore of cercosporin absorbs light energy to attain an electronically-activated triplet state and produces active oxygen species such as the hydroxyl radical, superoxide, hydrogen peroxide or singlet oxygen upon reaction with oxygen molecules (PubMed:11701851). These reactive oxygen species cause damage to various cellular components including lipids, proteins and nucleic acids (PubMed:11701851).</text>
</comment>
<comment type="subcellular location">
    <subcellularLocation>
        <location evidence="2">Nucleus</location>
    </subcellularLocation>
</comment>
<keyword id="KW-0238">DNA-binding</keyword>
<keyword id="KW-0479">Metal-binding</keyword>
<keyword id="KW-0539">Nucleus</keyword>
<keyword id="KW-0804">Transcription</keyword>
<keyword id="KW-0805">Transcription regulation</keyword>
<keyword id="KW-0862">Zinc</keyword>
<evidence type="ECO:0000250" key="1">
    <source>
        <dbReference type="UniProtKB" id="A0ST46"/>
    </source>
</evidence>
<evidence type="ECO:0000255" key="2">
    <source>
        <dbReference type="PROSITE-ProRule" id="PRU00227"/>
    </source>
</evidence>
<evidence type="ECO:0000256" key="3">
    <source>
        <dbReference type="SAM" id="MobiDB-lite"/>
    </source>
</evidence>
<evidence type="ECO:0000303" key="4">
    <source>
    </source>
</evidence>
<evidence type="ECO:0000303" key="5">
    <source>
    </source>
</evidence>
<reference key="1">
    <citation type="journal article" date="2018" name="Proc. Natl. Acad. Sci. U.S.A.">
        <title>Gene cluster conservation provides insight into cercosporin biosynthesis and extends production to the genus Colletotrichum.</title>
        <authorList>
            <person name="de Jonge R."/>
            <person name="Ebert M.K."/>
            <person name="Huitt-Roehl C.R."/>
            <person name="Pal P."/>
            <person name="Suttle J.C."/>
            <person name="Spanner R.E."/>
            <person name="Neubauer J.D."/>
            <person name="Jurick W.M. II"/>
            <person name="Stott K.A."/>
            <person name="Secor G.A."/>
            <person name="Thomma B.P.H.J."/>
            <person name="Van de Peer Y."/>
            <person name="Townsend C.A."/>
            <person name="Bolton M.D."/>
        </authorList>
    </citation>
    <scope>NUCLEOTIDE SEQUENCE [LARGE SCALE GENOMIC DNA]</scope>
    <scope>FUNCTION</scope>
    <scope>PATHWAY</scope>
    <source>
        <strain>09-40</strain>
    </source>
</reference>
<reference key="2">
    <citation type="journal article" date="2000" name="Annu. Rev. Phytopathol.">
        <title>The photoactivated cercospora toxin cercosporin: contributions to plant disease and fundamental biology.</title>
        <authorList>
            <person name="Daub M.E."/>
            <person name="Ehrenshaft M."/>
        </authorList>
    </citation>
    <scope>REVIEW ON CERCOSPORIN</scope>
</reference>
<accession>A0A2G5ICB4</accession>
<protein>
    <recommendedName>
        <fullName evidence="5">Cercosporin biosynthesis regulatory protein CTB8</fullName>
    </recommendedName>
    <alternativeName>
        <fullName evidence="5">Cercosporin toxin biosynthesis cluster protein 8</fullName>
    </alternativeName>
</protein>